<dbReference type="EC" id="3.1.31.-"/>
<dbReference type="EMBL" id="AP003301">
    <property type="protein sequence ID" value="BAB64802.1"/>
    <property type="molecule type" value="Genomic_DNA"/>
</dbReference>
<dbReference type="EMBL" id="AP008207">
    <property type="protein sequence ID" value="BAF04026.1"/>
    <property type="molecule type" value="Genomic_DNA"/>
</dbReference>
<dbReference type="EMBL" id="AP014957">
    <property type="protein sequence ID" value="BAS70569.1"/>
    <property type="molecule type" value="Genomic_DNA"/>
</dbReference>
<dbReference type="EMBL" id="CM000138">
    <property type="protein sequence ID" value="EAZ10677.1"/>
    <property type="molecule type" value="Genomic_DNA"/>
</dbReference>
<dbReference type="EMBL" id="AK103697">
    <property type="status" value="NOT_ANNOTATED_CDS"/>
    <property type="molecule type" value="mRNA"/>
</dbReference>
<dbReference type="RefSeq" id="XP_015621984.1">
    <property type="nucleotide sequence ID" value="XM_015766498.1"/>
</dbReference>
<dbReference type="FunCoup" id="Q942N7">
    <property type="interactions" value="15"/>
</dbReference>
<dbReference type="STRING" id="39947.Q942N7"/>
<dbReference type="PaxDb" id="39947-Q942N7"/>
<dbReference type="EnsemblPlants" id="Os01t0166100-01">
    <property type="protein sequence ID" value="Os01t0166100-01"/>
    <property type="gene ID" value="Os01g0166100"/>
</dbReference>
<dbReference type="Gramene" id="Os01t0166100-01">
    <property type="protein sequence ID" value="Os01t0166100-01"/>
    <property type="gene ID" value="Os01g0166100"/>
</dbReference>
<dbReference type="KEGG" id="dosa:Os01g0166100"/>
<dbReference type="eggNOG" id="ENOG502QT2R">
    <property type="taxonomic scope" value="Eukaryota"/>
</dbReference>
<dbReference type="HOGENOM" id="CLU_046484_1_1_1"/>
<dbReference type="InParanoid" id="Q942N7"/>
<dbReference type="OMA" id="LLYGHCC"/>
<dbReference type="OrthoDB" id="430293at2759"/>
<dbReference type="Proteomes" id="UP000000763">
    <property type="component" value="Chromosome 1"/>
</dbReference>
<dbReference type="Proteomes" id="UP000007752">
    <property type="component" value="Chromosome 1"/>
</dbReference>
<dbReference type="Proteomes" id="UP000059680">
    <property type="component" value="Chromosome 1"/>
</dbReference>
<dbReference type="GO" id="GO:0005886">
    <property type="term" value="C:plasma membrane"/>
    <property type="evidence" value="ECO:0007669"/>
    <property type="project" value="UniProtKB-SubCell"/>
</dbReference>
<dbReference type="GO" id="GO:0004519">
    <property type="term" value="F:endonuclease activity"/>
    <property type="evidence" value="ECO:0007669"/>
    <property type="project" value="UniProtKB-KW"/>
</dbReference>
<dbReference type="GO" id="GO:0046872">
    <property type="term" value="F:metal ion binding"/>
    <property type="evidence" value="ECO:0007669"/>
    <property type="project" value="UniProtKB-KW"/>
</dbReference>
<dbReference type="GO" id="GO:0003676">
    <property type="term" value="F:nucleic acid binding"/>
    <property type="evidence" value="ECO:0007669"/>
    <property type="project" value="InterPro"/>
</dbReference>
<dbReference type="FunFam" id="2.40.50.90:FF:000028">
    <property type="entry name" value="staphylococcal-like nuclease CAN2"/>
    <property type="match status" value="1"/>
</dbReference>
<dbReference type="Gene3D" id="2.40.50.90">
    <property type="match status" value="1"/>
</dbReference>
<dbReference type="Gene3D" id="1.20.120.1910">
    <property type="entry name" value="Cysteine-tRNA ligase, C-terminal anti-codon recognition domain"/>
    <property type="match status" value="1"/>
</dbReference>
<dbReference type="InterPro" id="IPR035437">
    <property type="entry name" value="SNase_OB-fold_sf"/>
</dbReference>
<dbReference type="InterPro" id="IPR016071">
    <property type="entry name" value="Staphylococal_nuclease_OB-fold"/>
</dbReference>
<dbReference type="InterPro" id="IPR002071">
    <property type="entry name" value="Thermonucl_AS"/>
</dbReference>
<dbReference type="PANTHER" id="PTHR12302">
    <property type="entry name" value="EBNA2 BINDING PROTEIN P100"/>
    <property type="match status" value="1"/>
</dbReference>
<dbReference type="PANTHER" id="PTHR12302:SF3">
    <property type="entry name" value="SERINE_THREONINE-PROTEIN KINASE 31"/>
    <property type="match status" value="1"/>
</dbReference>
<dbReference type="Pfam" id="PF00565">
    <property type="entry name" value="SNase"/>
    <property type="match status" value="1"/>
</dbReference>
<dbReference type="SMART" id="SM00318">
    <property type="entry name" value="SNc"/>
    <property type="match status" value="1"/>
</dbReference>
<dbReference type="SUPFAM" id="SSF50199">
    <property type="entry name" value="Staphylococcal nuclease"/>
    <property type="match status" value="1"/>
</dbReference>
<dbReference type="PROSITE" id="PS01284">
    <property type="entry name" value="TNASE_2"/>
    <property type="match status" value="1"/>
</dbReference>
<dbReference type="PROSITE" id="PS50830">
    <property type="entry name" value="TNASE_3"/>
    <property type="match status" value="1"/>
</dbReference>
<accession>Q942N7</accession>
<accession>A0A0N7KCE2</accession>
<evidence type="ECO:0000250" key="1"/>
<evidence type="ECO:0000255" key="2"/>
<evidence type="ECO:0000255" key="3">
    <source>
        <dbReference type="PROSITE-ProRule" id="PRU00272"/>
    </source>
</evidence>
<evidence type="ECO:0000256" key="4">
    <source>
        <dbReference type="SAM" id="MobiDB-lite"/>
    </source>
</evidence>
<evidence type="ECO:0000305" key="5"/>
<gene>
    <name type="ordered locus">Os01g0166100</name>
    <name type="ordered locus">LOC_Os01g07200</name>
    <name type="ORF">OsJ_00507</name>
    <name type="ORF">P0701D05.20</name>
</gene>
<reference key="1">
    <citation type="journal article" date="2002" name="Nature">
        <title>The genome sequence and structure of rice chromosome 1.</title>
        <authorList>
            <person name="Sasaki T."/>
            <person name="Matsumoto T."/>
            <person name="Yamamoto K."/>
            <person name="Sakata K."/>
            <person name="Baba T."/>
            <person name="Katayose Y."/>
            <person name="Wu J."/>
            <person name="Niimura Y."/>
            <person name="Cheng Z."/>
            <person name="Nagamura Y."/>
            <person name="Antonio B.A."/>
            <person name="Kanamori H."/>
            <person name="Hosokawa S."/>
            <person name="Masukawa M."/>
            <person name="Arikawa K."/>
            <person name="Chiden Y."/>
            <person name="Hayashi M."/>
            <person name="Okamoto M."/>
            <person name="Ando T."/>
            <person name="Aoki H."/>
            <person name="Arita K."/>
            <person name="Hamada M."/>
            <person name="Harada C."/>
            <person name="Hijishita S."/>
            <person name="Honda M."/>
            <person name="Ichikawa Y."/>
            <person name="Idonuma A."/>
            <person name="Iijima M."/>
            <person name="Ikeda M."/>
            <person name="Ikeno M."/>
            <person name="Ito S."/>
            <person name="Ito T."/>
            <person name="Ito Y."/>
            <person name="Ito Y."/>
            <person name="Iwabuchi A."/>
            <person name="Kamiya K."/>
            <person name="Karasawa W."/>
            <person name="Katagiri S."/>
            <person name="Kikuta A."/>
            <person name="Kobayashi N."/>
            <person name="Kono I."/>
            <person name="Machita K."/>
            <person name="Maehara T."/>
            <person name="Mizuno H."/>
            <person name="Mizubayashi T."/>
            <person name="Mukai Y."/>
            <person name="Nagasaki H."/>
            <person name="Nakashima M."/>
            <person name="Nakama Y."/>
            <person name="Nakamichi Y."/>
            <person name="Nakamura M."/>
            <person name="Namiki N."/>
            <person name="Negishi M."/>
            <person name="Ohta I."/>
            <person name="Ono N."/>
            <person name="Saji S."/>
            <person name="Sakai K."/>
            <person name="Shibata M."/>
            <person name="Shimokawa T."/>
            <person name="Shomura A."/>
            <person name="Song J."/>
            <person name="Takazaki Y."/>
            <person name="Terasawa K."/>
            <person name="Tsuji K."/>
            <person name="Waki K."/>
            <person name="Yamagata H."/>
            <person name="Yamane H."/>
            <person name="Yoshiki S."/>
            <person name="Yoshihara R."/>
            <person name="Yukawa K."/>
            <person name="Zhong H."/>
            <person name="Iwama H."/>
            <person name="Endo T."/>
            <person name="Ito H."/>
            <person name="Hahn J.H."/>
            <person name="Kim H.-I."/>
            <person name="Eun M.-Y."/>
            <person name="Yano M."/>
            <person name="Jiang J."/>
            <person name="Gojobori T."/>
        </authorList>
    </citation>
    <scope>NUCLEOTIDE SEQUENCE [LARGE SCALE GENOMIC DNA]</scope>
    <source>
        <strain>cv. Nipponbare</strain>
    </source>
</reference>
<reference key="2">
    <citation type="journal article" date="2005" name="Nature">
        <title>The map-based sequence of the rice genome.</title>
        <authorList>
            <consortium name="International rice genome sequencing project (IRGSP)"/>
        </authorList>
    </citation>
    <scope>NUCLEOTIDE SEQUENCE [LARGE SCALE GENOMIC DNA]</scope>
    <source>
        <strain>cv. Nipponbare</strain>
    </source>
</reference>
<reference key="3">
    <citation type="journal article" date="2008" name="Nucleic Acids Res.">
        <title>The rice annotation project database (RAP-DB): 2008 update.</title>
        <authorList>
            <consortium name="The rice annotation project (RAP)"/>
        </authorList>
    </citation>
    <scope>GENOME REANNOTATION</scope>
    <source>
        <strain>cv. Nipponbare</strain>
    </source>
</reference>
<reference key="4">
    <citation type="journal article" date="2013" name="Rice">
        <title>Improvement of the Oryza sativa Nipponbare reference genome using next generation sequence and optical map data.</title>
        <authorList>
            <person name="Kawahara Y."/>
            <person name="de la Bastide M."/>
            <person name="Hamilton J.P."/>
            <person name="Kanamori H."/>
            <person name="McCombie W.R."/>
            <person name="Ouyang S."/>
            <person name="Schwartz D.C."/>
            <person name="Tanaka T."/>
            <person name="Wu J."/>
            <person name="Zhou S."/>
            <person name="Childs K.L."/>
            <person name="Davidson R.M."/>
            <person name="Lin H."/>
            <person name="Quesada-Ocampo L."/>
            <person name="Vaillancourt B."/>
            <person name="Sakai H."/>
            <person name="Lee S.S."/>
            <person name="Kim J."/>
            <person name="Numa H."/>
            <person name="Itoh T."/>
            <person name="Buell C.R."/>
            <person name="Matsumoto T."/>
        </authorList>
    </citation>
    <scope>GENOME REANNOTATION</scope>
    <source>
        <strain>cv. Nipponbare</strain>
    </source>
</reference>
<reference key="5">
    <citation type="journal article" date="2005" name="PLoS Biol.">
        <title>The genomes of Oryza sativa: a history of duplications.</title>
        <authorList>
            <person name="Yu J."/>
            <person name="Wang J."/>
            <person name="Lin W."/>
            <person name="Li S."/>
            <person name="Li H."/>
            <person name="Zhou J."/>
            <person name="Ni P."/>
            <person name="Dong W."/>
            <person name="Hu S."/>
            <person name="Zeng C."/>
            <person name="Zhang J."/>
            <person name="Zhang Y."/>
            <person name="Li R."/>
            <person name="Xu Z."/>
            <person name="Li S."/>
            <person name="Li X."/>
            <person name="Zheng H."/>
            <person name="Cong L."/>
            <person name="Lin L."/>
            <person name="Yin J."/>
            <person name="Geng J."/>
            <person name="Li G."/>
            <person name="Shi J."/>
            <person name="Liu J."/>
            <person name="Lv H."/>
            <person name="Li J."/>
            <person name="Wang J."/>
            <person name="Deng Y."/>
            <person name="Ran L."/>
            <person name="Shi X."/>
            <person name="Wang X."/>
            <person name="Wu Q."/>
            <person name="Li C."/>
            <person name="Ren X."/>
            <person name="Wang J."/>
            <person name="Wang X."/>
            <person name="Li D."/>
            <person name="Liu D."/>
            <person name="Zhang X."/>
            <person name="Ji Z."/>
            <person name="Zhao W."/>
            <person name="Sun Y."/>
            <person name="Zhang Z."/>
            <person name="Bao J."/>
            <person name="Han Y."/>
            <person name="Dong L."/>
            <person name="Ji J."/>
            <person name="Chen P."/>
            <person name="Wu S."/>
            <person name="Liu J."/>
            <person name="Xiao Y."/>
            <person name="Bu D."/>
            <person name="Tan J."/>
            <person name="Yang L."/>
            <person name="Ye C."/>
            <person name="Zhang J."/>
            <person name="Xu J."/>
            <person name="Zhou Y."/>
            <person name="Yu Y."/>
            <person name="Zhang B."/>
            <person name="Zhuang S."/>
            <person name="Wei H."/>
            <person name="Liu B."/>
            <person name="Lei M."/>
            <person name="Yu H."/>
            <person name="Li Y."/>
            <person name="Xu H."/>
            <person name="Wei S."/>
            <person name="He X."/>
            <person name="Fang L."/>
            <person name="Zhang Z."/>
            <person name="Zhang Y."/>
            <person name="Huang X."/>
            <person name="Su Z."/>
            <person name="Tong W."/>
            <person name="Li J."/>
            <person name="Tong Z."/>
            <person name="Li S."/>
            <person name="Ye J."/>
            <person name="Wang L."/>
            <person name="Fang L."/>
            <person name="Lei T."/>
            <person name="Chen C.-S."/>
            <person name="Chen H.-C."/>
            <person name="Xu Z."/>
            <person name="Li H."/>
            <person name="Huang H."/>
            <person name="Zhang F."/>
            <person name="Xu H."/>
            <person name="Li N."/>
            <person name="Zhao C."/>
            <person name="Li S."/>
            <person name="Dong L."/>
            <person name="Huang Y."/>
            <person name="Li L."/>
            <person name="Xi Y."/>
            <person name="Qi Q."/>
            <person name="Li W."/>
            <person name="Zhang B."/>
            <person name="Hu W."/>
            <person name="Zhang Y."/>
            <person name="Tian X."/>
            <person name="Jiao Y."/>
            <person name="Liang X."/>
            <person name="Jin J."/>
            <person name="Gao L."/>
            <person name="Zheng W."/>
            <person name="Hao B."/>
            <person name="Liu S.-M."/>
            <person name="Wang W."/>
            <person name="Yuan L."/>
            <person name="Cao M."/>
            <person name="McDermott J."/>
            <person name="Samudrala R."/>
            <person name="Wang J."/>
            <person name="Wong G.K.-S."/>
            <person name="Yang H."/>
        </authorList>
    </citation>
    <scope>NUCLEOTIDE SEQUENCE [LARGE SCALE GENOMIC DNA]</scope>
    <source>
        <strain>cv. Nipponbare</strain>
    </source>
</reference>
<reference key="6">
    <citation type="journal article" date="2003" name="Science">
        <title>Collection, mapping, and annotation of over 28,000 cDNA clones from japonica rice.</title>
        <authorList>
            <consortium name="The rice full-length cDNA consortium"/>
        </authorList>
    </citation>
    <scope>NUCLEOTIDE SEQUENCE [LARGE SCALE MRNA]</scope>
    <source>
        <strain>cv. Nipponbare</strain>
    </source>
</reference>
<keyword id="KW-0106">Calcium</keyword>
<keyword id="KW-1003">Cell membrane</keyword>
<keyword id="KW-0255">Endonuclease</keyword>
<keyword id="KW-0378">Hydrolase</keyword>
<keyword id="KW-0449">Lipoprotein</keyword>
<keyword id="KW-0472">Membrane</keyword>
<keyword id="KW-0479">Metal-binding</keyword>
<keyword id="KW-0519">Myristate</keyword>
<keyword id="KW-0540">Nuclease</keyword>
<keyword id="KW-0564">Palmitate</keyword>
<keyword id="KW-1185">Reference proteome</keyword>
<proteinExistence type="evidence at transcript level"/>
<sequence length="331" mass="37016">MGNSIYRFLCGLCSPSPEYQPHGAHPAVAALGRDIQQFEATSQVPDGLSRHVVSSKKAQANWYKKLIVTWKKARPTPRTPEEAARLVVTTLKNHQKADVEGFLVFYGLPIPNAAASTPAPHTAHVPKPQGCKFELHTLPVDAKAVADGDTITVYIDTADPRESGNVPREIQKAAAERTRARAARDYQKADGLQKMIADAGYRQVPNARGEEVLAKKYRIRLRGIDAPESAMPYGKEAKEALLKMVQGKSLKVYVYDEDRYGRCVGDIYCDGVFVQEQMLKKGCAWHYTAYDQRPELAKWEKQAQSGRKGLWAASRPQKPWEWRRDKRNGTA</sequence>
<feature type="initiator methionine" description="Removed" evidence="2">
    <location>
        <position position="1"/>
    </location>
</feature>
<feature type="chain" id="PRO_0000430200" description="Probable staphylococcal-like nuclease CAN1">
    <location>
        <begin position="2"/>
        <end position="331"/>
    </location>
</feature>
<feature type="domain" description="TNase-like" evidence="3">
    <location>
        <begin position="136"/>
        <end position="313"/>
    </location>
</feature>
<feature type="region of interest" description="Disordered" evidence="4">
    <location>
        <begin position="306"/>
        <end position="331"/>
    </location>
</feature>
<feature type="compositionally biased region" description="Basic and acidic residues" evidence="4">
    <location>
        <begin position="318"/>
        <end position="331"/>
    </location>
</feature>
<feature type="active site" evidence="1">
    <location>
        <position position="220"/>
    </location>
</feature>
<feature type="active site" evidence="1">
    <location>
        <position position="228"/>
    </location>
</feature>
<feature type="active site" evidence="1">
    <location>
        <position position="262"/>
    </location>
</feature>
<feature type="binding site" evidence="3">
    <location>
        <position position="149"/>
    </location>
    <ligand>
        <name>Ca(2+)</name>
        <dbReference type="ChEBI" id="CHEBI:29108"/>
    </ligand>
</feature>
<feature type="binding site" evidence="3">
    <location>
        <position position="225"/>
    </location>
    <ligand>
        <name>Ca(2+)</name>
        <dbReference type="ChEBI" id="CHEBI:29108"/>
    </ligand>
</feature>
<feature type="lipid moiety-binding region" description="N-myristoyl glycine" evidence="2">
    <location>
        <position position="2"/>
    </location>
</feature>
<feature type="lipid moiety-binding region" description="S-palmitoyl cysteine" evidence="2">
    <location>
        <position position="10"/>
    </location>
</feature>
<feature type="sequence conflict" description="In Ref. 6; AK103697." evidence="5" ref="6">
    <original>K</original>
    <variation>E</variation>
    <location>
        <position position="132"/>
    </location>
</feature>
<feature type="sequence conflict" description="In Ref. 6; AK103697." evidence="5" ref="6">
    <original>E</original>
    <variation>G</variation>
    <location>
        <position position="211"/>
    </location>
</feature>
<organism>
    <name type="scientific">Oryza sativa subsp. japonica</name>
    <name type="common">Rice</name>
    <dbReference type="NCBI Taxonomy" id="39947"/>
    <lineage>
        <taxon>Eukaryota</taxon>
        <taxon>Viridiplantae</taxon>
        <taxon>Streptophyta</taxon>
        <taxon>Embryophyta</taxon>
        <taxon>Tracheophyta</taxon>
        <taxon>Spermatophyta</taxon>
        <taxon>Magnoliopsida</taxon>
        <taxon>Liliopsida</taxon>
        <taxon>Poales</taxon>
        <taxon>Poaceae</taxon>
        <taxon>BOP clade</taxon>
        <taxon>Oryzoideae</taxon>
        <taxon>Oryzeae</taxon>
        <taxon>Oryzinae</taxon>
        <taxon>Oryza</taxon>
        <taxon>Oryza sativa</taxon>
    </lineage>
</organism>
<name>CAN1_ORYSJ</name>
<protein>
    <recommendedName>
        <fullName>Probable staphylococcal-like nuclease CAN1</fullName>
        <ecNumber>3.1.31.-</ecNumber>
    </recommendedName>
    <alternativeName>
        <fullName>Calcium-dependent nuclease 1</fullName>
        <shortName>Ca(2+)-dependent nuclease 1</shortName>
    </alternativeName>
</protein>
<comment type="function">
    <text evidence="1">Enzyme that catalyzes the hydrolysis of both DNA and RNA at the 5' position of the phosphodiester bond.</text>
</comment>
<comment type="cofactor">
    <cofactor evidence="1">
        <name>Ca(2+)</name>
        <dbReference type="ChEBI" id="CHEBI:29108"/>
    </cofactor>
    <text evidence="1">Binds 1 Ca(2+) ion per subunit.</text>
</comment>
<comment type="subcellular location">
    <subcellularLocation>
        <location evidence="5">Cell membrane</location>
        <topology evidence="5">Lipid-anchor</topology>
    </subcellularLocation>
</comment>
<comment type="similarity">
    <text evidence="3">Belongs to the thermonuclease family.</text>
</comment>